<feature type="chain" id="PRO_0000092485" description="Maltose/maltodextrin import ATP-binding protein MalK">
    <location>
        <begin position="1"/>
        <end position="372"/>
    </location>
</feature>
<feature type="domain" description="ABC transporter" evidence="1">
    <location>
        <begin position="4"/>
        <end position="234"/>
    </location>
</feature>
<feature type="binding site" evidence="1">
    <location>
        <begin position="36"/>
        <end position="43"/>
    </location>
    <ligand>
        <name>ATP</name>
        <dbReference type="ChEBI" id="CHEBI:30616"/>
    </ligand>
</feature>
<proteinExistence type="inferred from homology"/>
<protein>
    <recommendedName>
        <fullName evidence="1">Maltose/maltodextrin import ATP-binding protein MalK</fullName>
        <ecNumber evidence="1">7.5.2.1</ecNumber>
    </recommendedName>
</protein>
<keyword id="KW-0067">ATP-binding</keyword>
<keyword id="KW-0997">Cell inner membrane</keyword>
<keyword id="KW-1003">Cell membrane</keyword>
<keyword id="KW-0472">Membrane</keyword>
<keyword id="KW-0547">Nucleotide-binding</keyword>
<keyword id="KW-0762">Sugar transport</keyword>
<keyword id="KW-1278">Translocase</keyword>
<keyword id="KW-0813">Transport</keyword>
<comment type="function">
    <text evidence="1">Part of the ABC transporter complex MalEFGK involved in maltose/maltodextrin import. Responsible for energy coupling to the transport system.</text>
</comment>
<comment type="catalytic activity">
    <reaction evidence="1">
        <text>D-maltose(out) + ATP + H2O = D-maltose(in) + ADP + phosphate + H(+)</text>
        <dbReference type="Rhea" id="RHEA:22132"/>
        <dbReference type="ChEBI" id="CHEBI:15377"/>
        <dbReference type="ChEBI" id="CHEBI:15378"/>
        <dbReference type="ChEBI" id="CHEBI:17306"/>
        <dbReference type="ChEBI" id="CHEBI:30616"/>
        <dbReference type="ChEBI" id="CHEBI:43474"/>
        <dbReference type="ChEBI" id="CHEBI:456216"/>
        <dbReference type="EC" id="7.5.2.1"/>
    </reaction>
</comment>
<comment type="subunit">
    <text evidence="1">The complex is composed of two ATP-binding proteins (MalK), two transmembrane proteins (MalG and MalK) and a solute-binding protein (MalE).</text>
</comment>
<comment type="subcellular location">
    <subcellularLocation>
        <location evidence="1">Cell inner membrane</location>
        <topology evidence="1">Peripheral membrane protein</topology>
    </subcellularLocation>
</comment>
<comment type="similarity">
    <text evidence="1">Belongs to the ABC transporter superfamily. Maltooligosaccharide importer (TC 3.A.1.1.1) family.</text>
</comment>
<name>MALK_VIBPA</name>
<dbReference type="EC" id="7.5.2.1" evidence="1"/>
<dbReference type="EMBL" id="BA000032">
    <property type="protein sequence ID" value="BAC62745.1"/>
    <property type="molecule type" value="Genomic_DNA"/>
</dbReference>
<dbReference type="RefSeq" id="NP_800912.1">
    <property type="nucleotide sequence ID" value="NC_004605.1"/>
</dbReference>
<dbReference type="RefSeq" id="WP_005463102.1">
    <property type="nucleotide sequence ID" value="NC_004605.1"/>
</dbReference>
<dbReference type="SMR" id="Q87GB5"/>
<dbReference type="GeneID" id="1192098"/>
<dbReference type="KEGG" id="vpa:VPA1402"/>
<dbReference type="PATRIC" id="fig|223926.6.peg.4327"/>
<dbReference type="eggNOG" id="COG3842">
    <property type="taxonomic scope" value="Bacteria"/>
</dbReference>
<dbReference type="HOGENOM" id="CLU_000604_1_1_6"/>
<dbReference type="Proteomes" id="UP000002493">
    <property type="component" value="Chromosome 2"/>
</dbReference>
<dbReference type="GO" id="GO:0055052">
    <property type="term" value="C:ATP-binding cassette (ABC) transporter complex, substrate-binding subunit-containing"/>
    <property type="evidence" value="ECO:0007669"/>
    <property type="project" value="TreeGrafter"/>
</dbReference>
<dbReference type="GO" id="GO:1990060">
    <property type="term" value="C:maltose transport complex"/>
    <property type="evidence" value="ECO:0007669"/>
    <property type="project" value="TreeGrafter"/>
</dbReference>
<dbReference type="GO" id="GO:0015423">
    <property type="term" value="F:ABC-type maltose transporter activity"/>
    <property type="evidence" value="ECO:0007669"/>
    <property type="project" value="UniProtKB-EC"/>
</dbReference>
<dbReference type="GO" id="GO:0005524">
    <property type="term" value="F:ATP binding"/>
    <property type="evidence" value="ECO:0007669"/>
    <property type="project" value="UniProtKB-KW"/>
</dbReference>
<dbReference type="GO" id="GO:0016887">
    <property type="term" value="F:ATP hydrolysis activity"/>
    <property type="evidence" value="ECO:0007669"/>
    <property type="project" value="InterPro"/>
</dbReference>
<dbReference type="CDD" id="cd03301">
    <property type="entry name" value="ABC_MalK_N"/>
    <property type="match status" value="1"/>
</dbReference>
<dbReference type="FunFam" id="3.40.50.300:FF:000042">
    <property type="entry name" value="Maltose/maltodextrin ABC transporter, ATP-binding protein"/>
    <property type="match status" value="1"/>
</dbReference>
<dbReference type="FunFam" id="2.40.50.100:FF:000014">
    <property type="entry name" value="Maltose/maltodextrin import ATP-binding protein MalK"/>
    <property type="match status" value="1"/>
</dbReference>
<dbReference type="Gene3D" id="2.40.50.100">
    <property type="match status" value="1"/>
</dbReference>
<dbReference type="Gene3D" id="2.40.50.140">
    <property type="entry name" value="Nucleic acid-binding proteins"/>
    <property type="match status" value="1"/>
</dbReference>
<dbReference type="Gene3D" id="3.40.50.300">
    <property type="entry name" value="P-loop containing nucleotide triphosphate hydrolases"/>
    <property type="match status" value="1"/>
</dbReference>
<dbReference type="InterPro" id="IPR003593">
    <property type="entry name" value="AAA+_ATPase"/>
</dbReference>
<dbReference type="InterPro" id="IPR003439">
    <property type="entry name" value="ABC_transporter-like_ATP-bd"/>
</dbReference>
<dbReference type="InterPro" id="IPR017871">
    <property type="entry name" value="ABC_transporter-like_CS"/>
</dbReference>
<dbReference type="InterPro" id="IPR015855">
    <property type="entry name" value="ABC_transpr_MalK-like"/>
</dbReference>
<dbReference type="InterPro" id="IPR047641">
    <property type="entry name" value="ABC_transpr_MalK/UgpC-like"/>
</dbReference>
<dbReference type="InterPro" id="IPR008995">
    <property type="entry name" value="Mo/tungstate-bd_C_term_dom"/>
</dbReference>
<dbReference type="InterPro" id="IPR012340">
    <property type="entry name" value="NA-bd_OB-fold"/>
</dbReference>
<dbReference type="InterPro" id="IPR027417">
    <property type="entry name" value="P-loop_NTPase"/>
</dbReference>
<dbReference type="InterPro" id="IPR013611">
    <property type="entry name" value="Transp-assoc_OB_typ2"/>
</dbReference>
<dbReference type="NCBIfam" id="NF008233">
    <property type="entry name" value="PRK11000.1"/>
    <property type="match status" value="1"/>
</dbReference>
<dbReference type="NCBIfam" id="NF008653">
    <property type="entry name" value="PRK11650.1"/>
    <property type="match status" value="1"/>
</dbReference>
<dbReference type="PANTHER" id="PTHR43875">
    <property type="entry name" value="MALTODEXTRIN IMPORT ATP-BINDING PROTEIN MSMX"/>
    <property type="match status" value="1"/>
</dbReference>
<dbReference type="PANTHER" id="PTHR43875:SF3">
    <property type="entry name" value="MALTOSE_MALTODEXTRIN IMPORT ATP-BINDING PROTEIN MALK"/>
    <property type="match status" value="1"/>
</dbReference>
<dbReference type="Pfam" id="PF00005">
    <property type="entry name" value="ABC_tran"/>
    <property type="match status" value="1"/>
</dbReference>
<dbReference type="Pfam" id="PF08402">
    <property type="entry name" value="TOBE_2"/>
    <property type="match status" value="1"/>
</dbReference>
<dbReference type="SMART" id="SM00382">
    <property type="entry name" value="AAA"/>
    <property type="match status" value="1"/>
</dbReference>
<dbReference type="SUPFAM" id="SSF50331">
    <property type="entry name" value="MOP-like"/>
    <property type="match status" value="1"/>
</dbReference>
<dbReference type="SUPFAM" id="SSF52540">
    <property type="entry name" value="P-loop containing nucleoside triphosphate hydrolases"/>
    <property type="match status" value="1"/>
</dbReference>
<dbReference type="PROSITE" id="PS00211">
    <property type="entry name" value="ABC_TRANSPORTER_1"/>
    <property type="match status" value="1"/>
</dbReference>
<dbReference type="PROSITE" id="PS50893">
    <property type="entry name" value="ABC_TRANSPORTER_2"/>
    <property type="match status" value="1"/>
</dbReference>
<dbReference type="PROSITE" id="PS51245">
    <property type="entry name" value="MALK"/>
    <property type="match status" value="1"/>
</dbReference>
<accession>Q87GB5</accession>
<gene>
    <name evidence="1" type="primary">malK</name>
    <name type="ordered locus">VPA1402</name>
</gene>
<reference key="1">
    <citation type="journal article" date="2003" name="Lancet">
        <title>Genome sequence of Vibrio parahaemolyticus: a pathogenic mechanism distinct from that of V. cholerae.</title>
        <authorList>
            <person name="Makino K."/>
            <person name="Oshima K."/>
            <person name="Kurokawa K."/>
            <person name="Yokoyama K."/>
            <person name="Uda T."/>
            <person name="Tagomori K."/>
            <person name="Iijima Y."/>
            <person name="Najima M."/>
            <person name="Nakano M."/>
            <person name="Yamashita A."/>
            <person name="Kubota Y."/>
            <person name="Kimura S."/>
            <person name="Yasunaga T."/>
            <person name="Honda T."/>
            <person name="Shinagawa H."/>
            <person name="Hattori M."/>
            <person name="Iida T."/>
        </authorList>
    </citation>
    <scope>NUCLEOTIDE SEQUENCE [LARGE SCALE GENOMIC DNA]</scope>
    <source>
        <strain>RIMD 2210633</strain>
    </source>
</reference>
<organism>
    <name type="scientific">Vibrio parahaemolyticus serotype O3:K6 (strain RIMD 2210633)</name>
    <dbReference type="NCBI Taxonomy" id="223926"/>
    <lineage>
        <taxon>Bacteria</taxon>
        <taxon>Pseudomonadati</taxon>
        <taxon>Pseudomonadota</taxon>
        <taxon>Gammaproteobacteria</taxon>
        <taxon>Vibrionales</taxon>
        <taxon>Vibrionaceae</taxon>
        <taxon>Vibrio</taxon>
    </lineage>
</organism>
<evidence type="ECO:0000255" key="1">
    <source>
        <dbReference type="HAMAP-Rule" id="MF_01709"/>
    </source>
</evidence>
<sequence length="372" mass="41157">MASVTLKNVCKAYGDVLISKNVDLQIDEGEFVVFVGPSGCGKSTLLRCIAGLEDITSGDLYIGDQRMNDVEPSKRGVGMVFQSYALYPHLNLYDNMSFGLKLAKADKAEIDKRVEHAAEILQLGHLLERQPKALSGGQRQRVAIGRTLVSQPNVFLLDEPLSNLDAALRVNMRAQITKLQRQLGCTMIYVTHDQVEAMTMADKIVVLDGGYVSQVGKPLELYHYPQNRFVAGFIGSPKMNFMSVFIDEVESERVKVQLSNGVSFWIPVDGTTVNRGDRMSLGIRPEHLLSATEADATIHGEVMIVEKLGNETQVYLNLEGADADVIYRQPDTLAVDTGDKLEIGIPAHRCHLFHSDGRACKRLFKENGVDFE</sequence>